<evidence type="ECO:0000255" key="1">
    <source>
        <dbReference type="HAMAP-Rule" id="MF_01805"/>
    </source>
</evidence>
<accession>B7JL37</accession>
<sequence>MQYNFKVEAFEGPLDLLLHLIHRYEIDIYNIPVAEITEQYLSYVHTMKELQLDVASEYLVMAATLLQIKSKMLLPKHEEDVLDNGDDFIDDPRQELMERLIEYKKYKQVATELKEREQERAQLYTRPPIDFTSLQQEEETNLPLDVTLYDMLAAFQKLMRRKKAKKPVTTRITRQEIPIEQRMTDILKQLEIQGGRQSFYDLFVDDEREIMVVTFLAVLELMKNQQIIIEQEHNFDEIFVSSYTKSA</sequence>
<feature type="chain" id="PRO_1000187550" description="Segregation and condensation protein A">
    <location>
        <begin position="1"/>
        <end position="247"/>
    </location>
</feature>
<dbReference type="EMBL" id="CP001283">
    <property type="protein sequence ID" value="ACK91949.1"/>
    <property type="molecule type" value="Genomic_DNA"/>
</dbReference>
<dbReference type="RefSeq" id="WP_001199758.1">
    <property type="nucleotide sequence ID" value="NC_011773.1"/>
</dbReference>
<dbReference type="SMR" id="B7JL37"/>
<dbReference type="GeneID" id="93007047"/>
<dbReference type="KEGG" id="bcu:BCAH820_4078"/>
<dbReference type="HOGENOM" id="CLU_038686_3_1_9"/>
<dbReference type="Proteomes" id="UP000001363">
    <property type="component" value="Chromosome"/>
</dbReference>
<dbReference type="GO" id="GO:0005737">
    <property type="term" value="C:cytoplasm"/>
    <property type="evidence" value="ECO:0007669"/>
    <property type="project" value="UniProtKB-SubCell"/>
</dbReference>
<dbReference type="GO" id="GO:0051301">
    <property type="term" value="P:cell division"/>
    <property type="evidence" value="ECO:0007669"/>
    <property type="project" value="UniProtKB-KW"/>
</dbReference>
<dbReference type="GO" id="GO:0007059">
    <property type="term" value="P:chromosome segregation"/>
    <property type="evidence" value="ECO:0007669"/>
    <property type="project" value="UniProtKB-UniRule"/>
</dbReference>
<dbReference type="GO" id="GO:0006260">
    <property type="term" value="P:DNA replication"/>
    <property type="evidence" value="ECO:0007669"/>
    <property type="project" value="UniProtKB-UniRule"/>
</dbReference>
<dbReference type="Gene3D" id="6.10.250.2410">
    <property type="match status" value="1"/>
</dbReference>
<dbReference type="Gene3D" id="1.10.10.580">
    <property type="entry name" value="Structural maintenance of chromosome 1. Chain E"/>
    <property type="match status" value="1"/>
</dbReference>
<dbReference type="HAMAP" id="MF_01805">
    <property type="entry name" value="ScpA"/>
    <property type="match status" value="1"/>
</dbReference>
<dbReference type="InterPro" id="IPR003768">
    <property type="entry name" value="ScpA"/>
</dbReference>
<dbReference type="InterPro" id="IPR023093">
    <property type="entry name" value="ScpA-like_C"/>
</dbReference>
<dbReference type="NCBIfam" id="NF000992">
    <property type="entry name" value="PRK00104.1-1"/>
    <property type="match status" value="1"/>
</dbReference>
<dbReference type="NCBIfam" id="NF000995">
    <property type="entry name" value="PRK00104.1-4"/>
    <property type="match status" value="1"/>
</dbReference>
<dbReference type="PANTHER" id="PTHR33969">
    <property type="entry name" value="SEGREGATION AND CONDENSATION PROTEIN A"/>
    <property type="match status" value="1"/>
</dbReference>
<dbReference type="PANTHER" id="PTHR33969:SF2">
    <property type="entry name" value="SEGREGATION AND CONDENSATION PROTEIN A"/>
    <property type="match status" value="1"/>
</dbReference>
<dbReference type="Pfam" id="PF02616">
    <property type="entry name" value="SMC_ScpA"/>
    <property type="match status" value="1"/>
</dbReference>
<protein>
    <recommendedName>
        <fullName evidence="1">Segregation and condensation protein A</fullName>
    </recommendedName>
</protein>
<organism>
    <name type="scientific">Bacillus cereus (strain AH820)</name>
    <dbReference type="NCBI Taxonomy" id="405535"/>
    <lineage>
        <taxon>Bacteria</taxon>
        <taxon>Bacillati</taxon>
        <taxon>Bacillota</taxon>
        <taxon>Bacilli</taxon>
        <taxon>Bacillales</taxon>
        <taxon>Bacillaceae</taxon>
        <taxon>Bacillus</taxon>
        <taxon>Bacillus cereus group</taxon>
    </lineage>
</organism>
<name>SCPA_BACC0</name>
<reference key="1">
    <citation type="submission" date="2008-10" db="EMBL/GenBank/DDBJ databases">
        <title>Genome sequence of Bacillus cereus AH820.</title>
        <authorList>
            <person name="Dodson R.J."/>
            <person name="Durkin A.S."/>
            <person name="Rosovitz M.J."/>
            <person name="Rasko D.A."/>
            <person name="Hoffmaster A."/>
            <person name="Ravel J."/>
            <person name="Sutton G."/>
        </authorList>
    </citation>
    <scope>NUCLEOTIDE SEQUENCE [LARGE SCALE GENOMIC DNA]</scope>
    <source>
        <strain>AH820</strain>
    </source>
</reference>
<comment type="function">
    <text evidence="1">Participates in chromosomal partition during cell division. May act via the formation of a condensin-like complex containing Smc and ScpB that pull DNA away from mid-cell into both cell halves.</text>
</comment>
<comment type="subunit">
    <text evidence="1">Component of a cohesin-like complex composed of ScpA, ScpB and the Smc homodimer, in which ScpA and ScpB bind to the head domain of Smc. The presence of the three proteins is required for the association of the complex with DNA.</text>
</comment>
<comment type="subcellular location">
    <subcellularLocation>
        <location evidence="1">Cytoplasm</location>
    </subcellularLocation>
    <text evidence="1">Associated with two foci at the outer edges of the nucleoid region in young cells, and at four foci within both cell halves in older cells.</text>
</comment>
<comment type="similarity">
    <text evidence="1">Belongs to the ScpA family.</text>
</comment>
<gene>
    <name evidence="1" type="primary">scpA</name>
    <name type="ordered locus">BCAH820_4078</name>
</gene>
<proteinExistence type="inferred from homology"/>
<keyword id="KW-0131">Cell cycle</keyword>
<keyword id="KW-0132">Cell division</keyword>
<keyword id="KW-0159">Chromosome partition</keyword>
<keyword id="KW-0963">Cytoplasm</keyword>